<organism>
    <name type="scientific">Salinibacter ruber (strain DSM 13855 / M31)</name>
    <dbReference type="NCBI Taxonomy" id="309807"/>
    <lineage>
        <taxon>Bacteria</taxon>
        <taxon>Pseudomonadati</taxon>
        <taxon>Rhodothermota</taxon>
        <taxon>Rhodothermia</taxon>
        <taxon>Rhodothermales</taxon>
        <taxon>Salinibacteraceae</taxon>
        <taxon>Salinibacter</taxon>
    </lineage>
</organism>
<protein>
    <recommendedName>
        <fullName evidence="1">Ribosomal RNA small subunit methyltransferase A</fullName>
        <ecNumber evidence="1">2.1.1.182</ecNumber>
    </recommendedName>
    <alternativeName>
        <fullName evidence="1">16S rRNA (adenine(1518)-N(6)/adenine(1519)-N(6))-dimethyltransferase</fullName>
    </alternativeName>
    <alternativeName>
        <fullName evidence="1">16S rRNA dimethyladenosine transferase</fullName>
    </alternativeName>
    <alternativeName>
        <fullName evidence="1">16S rRNA dimethylase</fullName>
    </alternativeName>
    <alternativeName>
        <fullName evidence="1">S-adenosylmethionine-6-N', N'-adenosyl(rRNA) dimethyltransferase</fullName>
    </alternativeName>
</protein>
<evidence type="ECO:0000255" key="1">
    <source>
        <dbReference type="HAMAP-Rule" id="MF_00607"/>
    </source>
</evidence>
<evidence type="ECO:0000256" key="2">
    <source>
        <dbReference type="SAM" id="MobiDB-lite"/>
    </source>
</evidence>
<dbReference type="EC" id="2.1.1.182" evidence="1"/>
<dbReference type="EMBL" id="CP000159">
    <property type="protein sequence ID" value="ABC45883.1"/>
    <property type="molecule type" value="Genomic_DNA"/>
</dbReference>
<dbReference type="RefSeq" id="YP_446299.1">
    <property type="nucleotide sequence ID" value="NC_007677.1"/>
</dbReference>
<dbReference type="SMR" id="Q2S0I2"/>
<dbReference type="STRING" id="309807.SRU_2194"/>
<dbReference type="EnsemblBacteria" id="ABC45883">
    <property type="protein sequence ID" value="ABC45883"/>
    <property type="gene ID" value="SRU_2194"/>
</dbReference>
<dbReference type="KEGG" id="sru:SRU_2194"/>
<dbReference type="PATRIC" id="fig|309807.25.peg.2282"/>
<dbReference type="eggNOG" id="COG0030">
    <property type="taxonomic scope" value="Bacteria"/>
</dbReference>
<dbReference type="HOGENOM" id="CLU_041220_0_1_10"/>
<dbReference type="OrthoDB" id="9814755at2"/>
<dbReference type="Proteomes" id="UP000008674">
    <property type="component" value="Chromosome"/>
</dbReference>
<dbReference type="GO" id="GO:0005737">
    <property type="term" value="C:cytoplasm"/>
    <property type="evidence" value="ECO:0007669"/>
    <property type="project" value="UniProtKB-SubCell"/>
</dbReference>
<dbReference type="GO" id="GO:0052908">
    <property type="term" value="F:16S rRNA (adenine(1518)-N(6)/adenine(1519)-N(6))-dimethyltransferase activity"/>
    <property type="evidence" value="ECO:0007669"/>
    <property type="project" value="UniProtKB-EC"/>
</dbReference>
<dbReference type="GO" id="GO:0003723">
    <property type="term" value="F:RNA binding"/>
    <property type="evidence" value="ECO:0007669"/>
    <property type="project" value="UniProtKB-KW"/>
</dbReference>
<dbReference type="CDD" id="cd02440">
    <property type="entry name" value="AdoMet_MTases"/>
    <property type="match status" value="1"/>
</dbReference>
<dbReference type="Gene3D" id="1.10.8.100">
    <property type="entry name" value="Ribosomal RNA adenine dimethylase-like, domain 2"/>
    <property type="match status" value="1"/>
</dbReference>
<dbReference type="Gene3D" id="3.40.50.150">
    <property type="entry name" value="Vaccinia Virus protein VP39"/>
    <property type="match status" value="1"/>
</dbReference>
<dbReference type="HAMAP" id="MF_00607">
    <property type="entry name" value="16SrRNA_methyltr_A"/>
    <property type="match status" value="1"/>
</dbReference>
<dbReference type="InterPro" id="IPR001737">
    <property type="entry name" value="KsgA/Erm"/>
</dbReference>
<dbReference type="InterPro" id="IPR023165">
    <property type="entry name" value="rRNA_Ade_diMease-like_C"/>
</dbReference>
<dbReference type="InterPro" id="IPR020596">
    <property type="entry name" value="rRNA_Ade_Mease_Trfase_CS"/>
</dbReference>
<dbReference type="InterPro" id="IPR020598">
    <property type="entry name" value="rRNA_Ade_methylase_Trfase_N"/>
</dbReference>
<dbReference type="InterPro" id="IPR011530">
    <property type="entry name" value="rRNA_adenine_dimethylase"/>
</dbReference>
<dbReference type="InterPro" id="IPR029063">
    <property type="entry name" value="SAM-dependent_MTases_sf"/>
</dbReference>
<dbReference type="NCBIfam" id="TIGR00755">
    <property type="entry name" value="ksgA"/>
    <property type="match status" value="1"/>
</dbReference>
<dbReference type="PANTHER" id="PTHR11727">
    <property type="entry name" value="DIMETHYLADENOSINE TRANSFERASE"/>
    <property type="match status" value="1"/>
</dbReference>
<dbReference type="PANTHER" id="PTHR11727:SF18">
    <property type="entry name" value="RRNA ADENINE N(6)-METHYLTRANSFERASE"/>
    <property type="match status" value="1"/>
</dbReference>
<dbReference type="Pfam" id="PF00398">
    <property type="entry name" value="RrnaAD"/>
    <property type="match status" value="1"/>
</dbReference>
<dbReference type="SMART" id="SM00650">
    <property type="entry name" value="rADc"/>
    <property type="match status" value="1"/>
</dbReference>
<dbReference type="SUPFAM" id="SSF53335">
    <property type="entry name" value="S-adenosyl-L-methionine-dependent methyltransferases"/>
    <property type="match status" value="1"/>
</dbReference>
<dbReference type="PROSITE" id="PS01131">
    <property type="entry name" value="RRNA_A_DIMETH"/>
    <property type="match status" value="1"/>
</dbReference>
<dbReference type="PROSITE" id="PS51689">
    <property type="entry name" value="SAM_RNA_A_N6_MT"/>
    <property type="match status" value="1"/>
</dbReference>
<feature type="chain" id="PRO_0000257344" description="Ribosomal RNA small subunit methyltransferase A">
    <location>
        <begin position="1"/>
        <end position="296"/>
    </location>
</feature>
<feature type="region of interest" description="Disordered" evidence="2">
    <location>
        <begin position="1"/>
        <end position="24"/>
    </location>
</feature>
<feature type="compositionally biased region" description="Basic and acidic residues" evidence="2">
    <location>
        <begin position="1"/>
        <end position="11"/>
    </location>
</feature>
<feature type="compositionally biased region" description="Polar residues" evidence="2">
    <location>
        <begin position="12"/>
        <end position="24"/>
    </location>
</feature>
<feature type="binding site" evidence="1">
    <location>
        <position position="43"/>
    </location>
    <ligand>
        <name>S-adenosyl-L-methionine</name>
        <dbReference type="ChEBI" id="CHEBI:59789"/>
    </ligand>
</feature>
<feature type="binding site" evidence="1">
    <location>
        <position position="45"/>
    </location>
    <ligand>
        <name>S-adenosyl-L-methionine</name>
        <dbReference type="ChEBI" id="CHEBI:59789"/>
    </ligand>
</feature>
<feature type="binding site" evidence="1">
    <location>
        <position position="70"/>
    </location>
    <ligand>
        <name>S-adenosyl-L-methionine</name>
        <dbReference type="ChEBI" id="CHEBI:59789"/>
    </ligand>
</feature>
<feature type="binding site" evidence="1">
    <location>
        <position position="91"/>
    </location>
    <ligand>
        <name>S-adenosyl-L-methionine</name>
        <dbReference type="ChEBI" id="CHEBI:59789"/>
    </ligand>
</feature>
<feature type="binding site" evidence="1">
    <location>
        <position position="113"/>
    </location>
    <ligand>
        <name>S-adenosyl-L-methionine</name>
        <dbReference type="ChEBI" id="CHEBI:59789"/>
    </ligand>
</feature>
<feature type="binding site" evidence="1">
    <location>
        <position position="135"/>
    </location>
    <ligand>
        <name>S-adenosyl-L-methionine</name>
        <dbReference type="ChEBI" id="CHEBI:59789"/>
    </ligand>
</feature>
<accession>Q2S0I2</accession>
<keyword id="KW-0963">Cytoplasm</keyword>
<keyword id="KW-0489">Methyltransferase</keyword>
<keyword id="KW-1185">Reference proteome</keyword>
<keyword id="KW-0694">RNA-binding</keyword>
<keyword id="KW-0698">rRNA processing</keyword>
<keyword id="KW-0949">S-adenosyl-L-methionine</keyword>
<keyword id="KW-0808">Transferase</keyword>
<name>RSMA_SALRD</name>
<proteinExistence type="inferred from homology"/>
<reference key="1">
    <citation type="journal article" date="2005" name="Proc. Natl. Acad. Sci. U.S.A.">
        <title>The genome of Salinibacter ruber: convergence and gene exchange among hyperhalophilic bacteria and archaea.</title>
        <authorList>
            <person name="Mongodin E.F."/>
            <person name="Nelson K.E."/>
            <person name="Daugherty S."/>
            <person name="DeBoy R.T."/>
            <person name="Wister J."/>
            <person name="Khouri H."/>
            <person name="Weidman J."/>
            <person name="Walsh D.A."/>
            <person name="Papke R.T."/>
            <person name="Sanchez Perez G."/>
            <person name="Sharma A.K."/>
            <person name="Nesbo C.L."/>
            <person name="MacLeod D."/>
            <person name="Bapteste E."/>
            <person name="Doolittle W.F."/>
            <person name="Charlebois R.L."/>
            <person name="Legault B."/>
            <person name="Rodriguez-Valera F."/>
        </authorList>
    </citation>
    <scope>NUCLEOTIDE SEQUENCE [LARGE SCALE GENOMIC DNA]</scope>
    <source>
        <strain>DSM 13855 / CECT 5946 / M31</strain>
    </source>
</reference>
<comment type="function">
    <text evidence="1">Specifically dimethylates two adjacent adenosines (A1518 and A1519) in the loop of a conserved hairpin near the 3'-end of 16S rRNA in the 30S particle. May play a critical role in biogenesis of 30S subunits.</text>
</comment>
<comment type="catalytic activity">
    <reaction evidence="1">
        <text>adenosine(1518)/adenosine(1519) in 16S rRNA + 4 S-adenosyl-L-methionine = N(6)-dimethyladenosine(1518)/N(6)-dimethyladenosine(1519) in 16S rRNA + 4 S-adenosyl-L-homocysteine + 4 H(+)</text>
        <dbReference type="Rhea" id="RHEA:19609"/>
        <dbReference type="Rhea" id="RHEA-COMP:10232"/>
        <dbReference type="Rhea" id="RHEA-COMP:10233"/>
        <dbReference type="ChEBI" id="CHEBI:15378"/>
        <dbReference type="ChEBI" id="CHEBI:57856"/>
        <dbReference type="ChEBI" id="CHEBI:59789"/>
        <dbReference type="ChEBI" id="CHEBI:74411"/>
        <dbReference type="ChEBI" id="CHEBI:74493"/>
        <dbReference type="EC" id="2.1.1.182"/>
    </reaction>
</comment>
<comment type="subcellular location">
    <subcellularLocation>
        <location evidence="1">Cytoplasm</location>
    </subcellularLocation>
</comment>
<comment type="similarity">
    <text evidence="1">Belongs to the class I-like SAM-binding methyltransferase superfamily. rRNA adenine N(6)-methyltransferase family. RsmA subfamily.</text>
</comment>
<gene>
    <name evidence="1" type="primary">rsmA</name>
    <name evidence="1" type="synonym">ksgA</name>
    <name type="ordered locus">SRU_2194</name>
</gene>
<sequence length="296" mass="32960">MERSHVGRDCGSRSSPRAFSVPTSNVPMKMSIPFRPKQSLGQNFLHDPNMAEKIVGTLTAPPEAHVVEVGAGTGVLTERLAERHDRLTALEIDERAVEVLRERVPEADVRETDVRETDWAALADEKGGPLRVISNTPYYLTSPILFALLGQRDCLAEAVLTMQKEVAERIVAEPSTKAYGILSVLLQLFAEPTLCFTVPPQVFSPQPDVTSAVVRIRFGPDTEPEDLHFDDARRYVRAAFNQRRKMLRNSLSAWTKEQDVGFPNDWGRKRAEALTPDEFATLARHLDAHADPVPDA</sequence>